<reference key="1">
    <citation type="submission" date="2008-08" db="EMBL/GenBank/DDBJ databases">
        <title>The complete genome sequence of Thermodesulfovibrio yellowstonii strain ATCC 51303 / DSM 11347 / YP87.</title>
        <authorList>
            <person name="Dodson R.J."/>
            <person name="Durkin A.S."/>
            <person name="Wu M."/>
            <person name="Eisen J."/>
            <person name="Sutton G."/>
        </authorList>
    </citation>
    <scope>NUCLEOTIDE SEQUENCE [LARGE SCALE GENOMIC DNA]</scope>
    <source>
        <strain>ATCC 51303 / DSM 11347 / YP87</strain>
    </source>
</reference>
<protein>
    <recommendedName>
        <fullName evidence="1">Phospho-N-acetylmuramoyl-pentapeptide-transferase</fullName>
        <ecNumber evidence="1">2.7.8.13</ecNumber>
    </recommendedName>
    <alternativeName>
        <fullName evidence="1">UDP-MurNAc-pentapeptide phosphotransferase</fullName>
    </alternativeName>
</protein>
<evidence type="ECO:0000255" key="1">
    <source>
        <dbReference type="HAMAP-Rule" id="MF_00038"/>
    </source>
</evidence>
<gene>
    <name evidence="1" type="primary">mraY</name>
    <name type="ordered locus">THEYE_A1326</name>
</gene>
<keyword id="KW-0131">Cell cycle</keyword>
<keyword id="KW-0132">Cell division</keyword>
<keyword id="KW-0997">Cell inner membrane</keyword>
<keyword id="KW-1003">Cell membrane</keyword>
<keyword id="KW-0133">Cell shape</keyword>
<keyword id="KW-0961">Cell wall biogenesis/degradation</keyword>
<keyword id="KW-0460">Magnesium</keyword>
<keyword id="KW-0472">Membrane</keyword>
<keyword id="KW-0479">Metal-binding</keyword>
<keyword id="KW-0573">Peptidoglycan synthesis</keyword>
<keyword id="KW-1185">Reference proteome</keyword>
<keyword id="KW-0808">Transferase</keyword>
<keyword id="KW-0812">Transmembrane</keyword>
<keyword id="KW-1133">Transmembrane helix</keyword>
<feature type="chain" id="PRO_1000090683" description="Phospho-N-acetylmuramoyl-pentapeptide-transferase">
    <location>
        <begin position="1"/>
        <end position="361"/>
    </location>
</feature>
<feature type="transmembrane region" description="Helical" evidence="1">
    <location>
        <begin position="28"/>
        <end position="48"/>
    </location>
</feature>
<feature type="transmembrane region" description="Helical" evidence="1">
    <location>
        <begin position="73"/>
        <end position="93"/>
    </location>
</feature>
<feature type="transmembrane region" description="Helical" evidence="1">
    <location>
        <begin position="98"/>
        <end position="118"/>
    </location>
</feature>
<feature type="transmembrane region" description="Helical" evidence="1">
    <location>
        <begin position="132"/>
        <end position="152"/>
    </location>
</feature>
<feature type="transmembrane region" description="Helical" evidence="1">
    <location>
        <begin position="168"/>
        <end position="188"/>
    </location>
</feature>
<feature type="transmembrane region" description="Helical" evidence="1">
    <location>
        <begin position="199"/>
        <end position="219"/>
    </location>
</feature>
<feature type="transmembrane region" description="Helical" evidence="1">
    <location>
        <begin position="235"/>
        <end position="255"/>
    </location>
</feature>
<feature type="transmembrane region" description="Helical" evidence="1">
    <location>
        <begin position="263"/>
        <end position="283"/>
    </location>
</feature>
<feature type="transmembrane region" description="Helical" evidence="1">
    <location>
        <begin position="288"/>
        <end position="308"/>
    </location>
</feature>
<feature type="transmembrane region" description="Helical" evidence="1">
    <location>
        <begin position="338"/>
        <end position="358"/>
    </location>
</feature>
<organism>
    <name type="scientific">Thermodesulfovibrio yellowstonii (strain ATCC 51303 / DSM 11347 / YP87)</name>
    <dbReference type="NCBI Taxonomy" id="289376"/>
    <lineage>
        <taxon>Bacteria</taxon>
        <taxon>Pseudomonadati</taxon>
        <taxon>Nitrospirota</taxon>
        <taxon>Thermodesulfovibrionia</taxon>
        <taxon>Thermodesulfovibrionales</taxon>
        <taxon>Thermodesulfovibrionaceae</taxon>
        <taxon>Thermodesulfovibrio</taxon>
    </lineage>
</organism>
<name>MRAY_THEYD</name>
<accession>B5YFT8</accession>
<dbReference type="EC" id="2.7.8.13" evidence="1"/>
<dbReference type="EMBL" id="CP001147">
    <property type="protein sequence ID" value="ACI21155.1"/>
    <property type="molecule type" value="Genomic_DNA"/>
</dbReference>
<dbReference type="RefSeq" id="WP_012545877.1">
    <property type="nucleotide sequence ID" value="NC_011296.1"/>
</dbReference>
<dbReference type="RefSeq" id="YP_002249136.1">
    <property type="nucleotide sequence ID" value="NC_011296.1"/>
</dbReference>
<dbReference type="SMR" id="B5YFT8"/>
<dbReference type="FunCoup" id="B5YFT8">
    <property type="interactions" value="349"/>
</dbReference>
<dbReference type="STRING" id="289376.THEYE_A1326"/>
<dbReference type="EnsemblBacteria" id="ACI21155">
    <property type="protein sequence ID" value="ACI21155"/>
    <property type="gene ID" value="THEYE_A1326"/>
</dbReference>
<dbReference type="KEGG" id="tye:THEYE_A1326"/>
<dbReference type="PATRIC" id="fig|289376.4.peg.1293"/>
<dbReference type="eggNOG" id="COG0472">
    <property type="taxonomic scope" value="Bacteria"/>
</dbReference>
<dbReference type="HOGENOM" id="CLU_023982_0_0_0"/>
<dbReference type="InParanoid" id="B5YFT8"/>
<dbReference type="OrthoDB" id="9805475at2"/>
<dbReference type="UniPathway" id="UPA00219"/>
<dbReference type="Proteomes" id="UP000000718">
    <property type="component" value="Chromosome"/>
</dbReference>
<dbReference type="GO" id="GO:0005886">
    <property type="term" value="C:plasma membrane"/>
    <property type="evidence" value="ECO:0000318"/>
    <property type="project" value="GO_Central"/>
</dbReference>
<dbReference type="GO" id="GO:0046872">
    <property type="term" value="F:metal ion binding"/>
    <property type="evidence" value="ECO:0007669"/>
    <property type="project" value="UniProtKB-KW"/>
</dbReference>
<dbReference type="GO" id="GO:0008963">
    <property type="term" value="F:phospho-N-acetylmuramoyl-pentapeptide-transferase activity"/>
    <property type="evidence" value="ECO:0007669"/>
    <property type="project" value="UniProtKB-UniRule"/>
</dbReference>
<dbReference type="GO" id="GO:0016780">
    <property type="term" value="F:phosphotransferase activity, for other substituted phosphate groups"/>
    <property type="evidence" value="ECO:0000318"/>
    <property type="project" value="GO_Central"/>
</dbReference>
<dbReference type="GO" id="GO:0051992">
    <property type="term" value="F:UDP-N-acetylmuramoyl-L-alanyl-D-glutamyl-meso-2,6-diaminopimelyl-D-alanyl-D-alanine:undecaprenyl-phosphate transferase activity"/>
    <property type="evidence" value="ECO:0007669"/>
    <property type="project" value="RHEA"/>
</dbReference>
<dbReference type="GO" id="GO:0051301">
    <property type="term" value="P:cell division"/>
    <property type="evidence" value="ECO:0007669"/>
    <property type="project" value="UniProtKB-KW"/>
</dbReference>
<dbReference type="GO" id="GO:0044038">
    <property type="term" value="P:cell wall macromolecule biosynthetic process"/>
    <property type="evidence" value="ECO:0000318"/>
    <property type="project" value="GO_Central"/>
</dbReference>
<dbReference type="GO" id="GO:0071555">
    <property type="term" value="P:cell wall organization"/>
    <property type="evidence" value="ECO:0000318"/>
    <property type="project" value="GO_Central"/>
</dbReference>
<dbReference type="GO" id="GO:0009252">
    <property type="term" value="P:peptidoglycan biosynthetic process"/>
    <property type="evidence" value="ECO:0007669"/>
    <property type="project" value="UniProtKB-UniRule"/>
</dbReference>
<dbReference type="GO" id="GO:0008360">
    <property type="term" value="P:regulation of cell shape"/>
    <property type="evidence" value="ECO:0007669"/>
    <property type="project" value="UniProtKB-KW"/>
</dbReference>
<dbReference type="CDD" id="cd06852">
    <property type="entry name" value="GT_MraY"/>
    <property type="match status" value="1"/>
</dbReference>
<dbReference type="HAMAP" id="MF_00038">
    <property type="entry name" value="MraY"/>
    <property type="match status" value="1"/>
</dbReference>
<dbReference type="InterPro" id="IPR000715">
    <property type="entry name" value="Glycosyl_transferase_4"/>
</dbReference>
<dbReference type="InterPro" id="IPR003524">
    <property type="entry name" value="PNAcMuramoyl-5peptid_Trfase"/>
</dbReference>
<dbReference type="InterPro" id="IPR018480">
    <property type="entry name" value="PNAcMuramoyl-5peptid_Trfase_CS"/>
</dbReference>
<dbReference type="NCBIfam" id="TIGR00445">
    <property type="entry name" value="mraY"/>
    <property type="match status" value="1"/>
</dbReference>
<dbReference type="PANTHER" id="PTHR22926">
    <property type="entry name" value="PHOSPHO-N-ACETYLMURAMOYL-PENTAPEPTIDE-TRANSFERASE"/>
    <property type="match status" value="1"/>
</dbReference>
<dbReference type="PANTHER" id="PTHR22926:SF5">
    <property type="entry name" value="PHOSPHO-N-ACETYLMURAMOYL-PENTAPEPTIDE-TRANSFERASE HOMOLOG"/>
    <property type="match status" value="1"/>
</dbReference>
<dbReference type="Pfam" id="PF00953">
    <property type="entry name" value="Glycos_transf_4"/>
    <property type="match status" value="1"/>
</dbReference>
<dbReference type="Pfam" id="PF10555">
    <property type="entry name" value="MraY_sig1"/>
    <property type="match status" value="1"/>
</dbReference>
<dbReference type="PROSITE" id="PS01348">
    <property type="entry name" value="MRAY_2"/>
    <property type="match status" value="1"/>
</dbReference>
<sequence>MLYEILYSLSDYISGLNVFKYITFRTMLAILTSFFFTFIIAPPCIRWLKKLSLTQHIRDDGPKTHLKKEGTPTMGGIIITASVLVAVLMWGNLKNHYMWIMIISFLGFGLIGFIDDYLKITRKNYKGLPGRYKLFAQLLLASSVTLFLYFNPKDPYTTVLSIPFFKQWLIDLGIFYLPFAIFVIVGSSNAVNLTDGMDGLAAGLVGIASIVNAVLLYISGHAVFAKYLYVLYIPGTGELAVFCGAMLGACLGFLWYNSYPAEVFMGDVGSLSLGGALGSLAVITKHEIVLALVGGIFVVEALSVILQVGYFKLTNGKRIFRMAPLHHHFELKKWPEPKVIVRFWIIGIILALLSLLTLKLR</sequence>
<comment type="function">
    <text evidence="1">Catalyzes the initial step of the lipid cycle reactions in the biosynthesis of the cell wall peptidoglycan: transfers peptidoglycan precursor phospho-MurNAc-pentapeptide from UDP-MurNAc-pentapeptide onto the lipid carrier undecaprenyl phosphate, yielding undecaprenyl-pyrophosphoryl-MurNAc-pentapeptide, known as lipid I.</text>
</comment>
<comment type="catalytic activity">
    <reaction evidence="1">
        <text>UDP-N-acetyl-alpha-D-muramoyl-L-alanyl-gamma-D-glutamyl-meso-2,6-diaminopimeloyl-D-alanyl-D-alanine + di-trans,octa-cis-undecaprenyl phosphate = di-trans,octa-cis-undecaprenyl diphospho-N-acetyl-alpha-D-muramoyl-L-alanyl-D-glutamyl-meso-2,6-diaminopimeloyl-D-alanyl-D-alanine + UMP</text>
        <dbReference type="Rhea" id="RHEA:28386"/>
        <dbReference type="ChEBI" id="CHEBI:57865"/>
        <dbReference type="ChEBI" id="CHEBI:60392"/>
        <dbReference type="ChEBI" id="CHEBI:61386"/>
        <dbReference type="ChEBI" id="CHEBI:61387"/>
        <dbReference type="EC" id="2.7.8.13"/>
    </reaction>
</comment>
<comment type="cofactor">
    <cofactor evidence="1">
        <name>Mg(2+)</name>
        <dbReference type="ChEBI" id="CHEBI:18420"/>
    </cofactor>
</comment>
<comment type="pathway">
    <text evidence="1">Cell wall biogenesis; peptidoglycan biosynthesis.</text>
</comment>
<comment type="subcellular location">
    <subcellularLocation>
        <location evidence="1">Cell inner membrane</location>
        <topology evidence="1">Multi-pass membrane protein</topology>
    </subcellularLocation>
</comment>
<comment type="similarity">
    <text evidence="1">Belongs to the glycosyltransferase 4 family. MraY subfamily.</text>
</comment>
<proteinExistence type="inferred from homology"/>